<name>PGK_BACAH</name>
<sequence length="394" mass="42284">MNKKSIRDVDLKGKRVFCRVDFNVPMKEGKITDETRIRAALPTIQYLVEQGAKVILASHLGRPKGQAVEELRLTPVAARLGELLGKDVKKADEAFGPVAQEMVAAMNEGDVLVLENVRFYAGEEKNDAELAKEFAALADIFVNDAFGAAHRAHASTAGIADYLPAVSGLLMEKELEVLGKALSNPERPFTAIIGGAKVKDKIGVIRHLLDKVDNLIIGGGLAYTFVKALGHEIGLSLCEDDKIELAKEFMQLAKEKGVNFYMPVDVVITEEFSETATTKIVGIDSIPSNWEGVDIGPKTREIYADVIKNSKLVVWNGPMGVFEMTPFAEGTKAVGQALADAEGTYSVIGGGDSAAAVEKFGMADKMSHISTGGGASLEFMEGKELPGVVCLNDK</sequence>
<organism>
    <name type="scientific">Bacillus thuringiensis (strain Al Hakam)</name>
    <dbReference type="NCBI Taxonomy" id="412694"/>
    <lineage>
        <taxon>Bacteria</taxon>
        <taxon>Bacillati</taxon>
        <taxon>Bacillota</taxon>
        <taxon>Bacilli</taxon>
        <taxon>Bacillales</taxon>
        <taxon>Bacillaceae</taxon>
        <taxon>Bacillus</taxon>
        <taxon>Bacillus cereus group</taxon>
    </lineage>
</organism>
<accession>A0RKS6</accession>
<reference key="1">
    <citation type="journal article" date="2007" name="J. Bacteriol.">
        <title>The complete genome sequence of Bacillus thuringiensis Al Hakam.</title>
        <authorList>
            <person name="Challacombe J.F."/>
            <person name="Altherr M.R."/>
            <person name="Xie G."/>
            <person name="Bhotika S.S."/>
            <person name="Brown N."/>
            <person name="Bruce D."/>
            <person name="Campbell C.S."/>
            <person name="Campbell M.L."/>
            <person name="Chen J."/>
            <person name="Chertkov O."/>
            <person name="Cleland C."/>
            <person name="Dimitrijevic M."/>
            <person name="Doggett N.A."/>
            <person name="Fawcett J.J."/>
            <person name="Glavina T."/>
            <person name="Goodwin L.A."/>
            <person name="Green L.D."/>
            <person name="Han C.S."/>
            <person name="Hill K.K."/>
            <person name="Hitchcock P."/>
            <person name="Jackson P.J."/>
            <person name="Keim P."/>
            <person name="Kewalramani A.R."/>
            <person name="Longmire J."/>
            <person name="Lucas S."/>
            <person name="Malfatti S."/>
            <person name="Martinez D."/>
            <person name="McMurry K."/>
            <person name="Meincke L.J."/>
            <person name="Misra M."/>
            <person name="Moseman B.L."/>
            <person name="Mundt M."/>
            <person name="Munk A.C."/>
            <person name="Okinaka R.T."/>
            <person name="Parson-Quintana B."/>
            <person name="Reilly L.P."/>
            <person name="Richardson P."/>
            <person name="Robinson D.L."/>
            <person name="Saunders E."/>
            <person name="Tapia R."/>
            <person name="Tesmer J.G."/>
            <person name="Thayer N."/>
            <person name="Thompson L.S."/>
            <person name="Tice H."/>
            <person name="Ticknor L.O."/>
            <person name="Wills P.L."/>
            <person name="Gilna P."/>
            <person name="Brettin T.S."/>
        </authorList>
    </citation>
    <scope>NUCLEOTIDE SEQUENCE [LARGE SCALE GENOMIC DNA]</scope>
    <source>
        <strain>Al Hakam</strain>
    </source>
</reference>
<feature type="chain" id="PRO_1000057963" description="Phosphoglycerate kinase">
    <location>
        <begin position="1"/>
        <end position="394"/>
    </location>
</feature>
<feature type="binding site" evidence="1">
    <location>
        <begin position="21"/>
        <end position="23"/>
    </location>
    <ligand>
        <name>substrate</name>
    </ligand>
</feature>
<feature type="binding site" evidence="1">
    <location>
        <position position="36"/>
    </location>
    <ligand>
        <name>substrate</name>
    </ligand>
</feature>
<feature type="binding site" evidence="1">
    <location>
        <begin position="59"/>
        <end position="62"/>
    </location>
    <ligand>
        <name>substrate</name>
    </ligand>
</feature>
<feature type="binding site" evidence="1">
    <location>
        <position position="118"/>
    </location>
    <ligand>
        <name>substrate</name>
    </ligand>
</feature>
<feature type="binding site" evidence="1">
    <location>
        <position position="151"/>
    </location>
    <ligand>
        <name>substrate</name>
    </ligand>
</feature>
<feature type="binding site" evidence="1">
    <location>
        <position position="201"/>
    </location>
    <ligand>
        <name>ATP</name>
        <dbReference type="ChEBI" id="CHEBI:30616"/>
    </ligand>
</feature>
<feature type="binding site" evidence="1">
    <location>
        <position position="292"/>
    </location>
    <ligand>
        <name>ATP</name>
        <dbReference type="ChEBI" id="CHEBI:30616"/>
    </ligand>
</feature>
<feature type="binding site" evidence="1">
    <location>
        <position position="323"/>
    </location>
    <ligand>
        <name>ATP</name>
        <dbReference type="ChEBI" id="CHEBI:30616"/>
    </ligand>
</feature>
<feature type="binding site" evidence="1">
    <location>
        <begin position="350"/>
        <end position="353"/>
    </location>
    <ligand>
        <name>ATP</name>
        <dbReference type="ChEBI" id="CHEBI:30616"/>
    </ligand>
</feature>
<feature type="modified residue" description="Phosphoserine" evidence="1">
    <location>
        <position position="183"/>
    </location>
</feature>
<feature type="modified residue" description="Phosphothreonine" evidence="1">
    <location>
        <position position="299"/>
    </location>
</feature>
<protein>
    <recommendedName>
        <fullName evidence="1">Phosphoglycerate kinase</fullName>
        <ecNumber evidence="1">2.7.2.3</ecNumber>
    </recommendedName>
</protein>
<evidence type="ECO:0000255" key="1">
    <source>
        <dbReference type="HAMAP-Rule" id="MF_00145"/>
    </source>
</evidence>
<gene>
    <name evidence="1" type="primary">pgk</name>
    <name type="ordered locus">BALH_4630</name>
</gene>
<proteinExistence type="inferred from homology"/>
<keyword id="KW-0067">ATP-binding</keyword>
<keyword id="KW-0963">Cytoplasm</keyword>
<keyword id="KW-0324">Glycolysis</keyword>
<keyword id="KW-0418">Kinase</keyword>
<keyword id="KW-0547">Nucleotide-binding</keyword>
<keyword id="KW-0597">Phosphoprotein</keyword>
<keyword id="KW-0808">Transferase</keyword>
<dbReference type="EC" id="2.7.2.3" evidence="1"/>
<dbReference type="EMBL" id="CP000485">
    <property type="protein sequence ID" value="ABK87819.1"/>
    <property type="molecule type" value="Genomic_DNA"/>
</dbReference>
<dbReference type="RefSeq" id="WP_001036338.1">
    <property type="nucleotide sequence ID" value="NC_008600.1"/>
</dbReference>
<dbReference type="KEGG" id="btl:BALH_4630"/>
<dbReference type="HOGENOM" id="CLU_025427_0_2_9"/>
<dbReference type="UniPathway" id="UPA00109">
    <property type="reaction ID" value="UER00185"/>
</dbReference>
<dbReference type="GO" id="GO:0005829">
    <property type="term" value="C:cytosol"/>
    <property type="evidence" value="ECO:0007669"/>
    <property type="project" value="TreeGrafter"/>
</dbReference>
<dbReference type="GO" id="GO:0043531">
    <property type="term" value="F:ADP binding"/>
    <property type="evidence" value="ECO:0007669"/>
    <property type="project" value="TreeGrafter"/>
</dbReference>
<dbReference type="GO" id="GO:0005524">
    <property type="term" value="F:ATP binding"/>
    <property type="evidence" value="ECO:0007669"/>
    <property type="project" value="UniProtKB-KW"/>
</dbReference>
<dbReference type="GO" id="GO:0004618">
    <property type="term" value="F:phosphoglycerate kinase activity"/>
    <property type="evidence" value="ECO:0007669"/>
    <property type="project" value="UniProtKB-UniRule"/>
</dbReference>
<dbReference type="GO" id="GO:0006094">
    <property type="term" value="P:gluconeogenesis"/>
    <property type="evidence" value="ECO:0007669"/>
    <property type="project" value="TreeGrafter"/>
</dbReference>
<dbReference type="GO" id="GO:0006096">
    <property type="term" value="P:glycolytic process"/>
    <property type="evidence" value="ECO:0007669"/>
    <property type="project" value="UniProtKB-UniRule"/>
</dbReference>
<dbReference type="CDD" id="cd00318">
    <property type="entry name" value="Phosphoglycerate_kinase"/>
    <property type="match status" value="1"/>
</dbReference>
<dbReference type="FunFam" id="3.40.50.1260:FF:000001">
    <property type="entry name" value="Phosphoglycerate kinase"/>
    <property type="match status" value="1"/>
</dbReference>
<dbReference type="FunFam" id="3.40.50.1260:FF:000002">
    <property type="entry name" value="Phosphoglycerate kinase"/>
    <property type="match status" value="1"/>
</dbReference>
<dbReference type="Gene3D" id="3.40.50.1260">
    <property type="entry name" value="Phosphoglycerate kinase, N-terminal domain"/>
    <property type="match status" value="2"/>
</dbReference>
<dbReference type="HAMAP" id="MF_00145">
    <property type="entry name" value="Phosphoglyc_kinase"/>
    <property type="match status" value="1"/>
</dbReference>
<dbReference type="InterPro" id="IPR001576">
    <property type="entry name" value="Phosphoglycerate_kinase"/>
</dbReference>
<dbReference type="InterPro" id="IPR015911">
    <property type="entry name" value="Phosphoglycerate_kinase_CS"/>
</dbReference>
<dbReference type="InterPro" id="IPR015824">
    <property type="entry name" value="Phosphoglycerate_kinase_N"/>
</dbReference>
<dbReference type="InterPro" id="IPR036043">
    <property type="entry name" value="Phosphoglycerate_kinase_sf"/>
</dbReference>
<dbReference type="PANTHER" id="PTHR11406">
    <property type="entry name" value="PHOSPHOGLYCERATE KINASE"/>
    <property type="match status" value="1"/>
</dbReference>
<dbReference type="PANTHER" id="PTHR11406:SF23">
    <property type="entry name" value="PHOSPHOGLYCERATE KINASE 1, CHLOROPLASTIC-RELATED"/>
    <property type="match status" value="1"/>
</dbReference>
<dbReference type="Pfam" id="PF00162">
    <property type="entry name" value="PGK"/>
    <property type="match status" value="1"/>
</dbReference>
<dbReference type="PIRSF" id="PIRSF000724">
    <property type="entry name" value="Pgk"/>
    <property type="match status" value="1"/>
</dbReference>
<dbReference type="PRINTS" id="PR00477">
    <property type="entry name" value="PHGLYCKINASE"/>
</dbReference>
<dbReference type="SUPFAM" id="SSF53748">
    <property type="entry name" value="Phosphoglycerate kinase"/>
    <property type="match status" value="1"/>
</dbReference>
<dbReference type="PROSITE" id="PS00111">
    <property type="entry name" value="PGLYCERATE_KINASE"/>
    <property type="match status" value="1"/>
</dbReference>
<comment type="catalytic activity">
    <reaction evidence="1">
        <text>(2R)-3-phosphoglycerate + ATP = (2R)-3-phospho-glyceroyl phosphate + ADP</text>
        <dbReference type="Rhea" id="RHEA:14801"/>
        <dbReference type="ChEBI" id="CHEBI:30616"/>
        <dbReference type="ChEBI" id="CHEBI:57604"/>
        <dbReference type="ChEBI" id="CHEBI:58272"/>
        <dbReference type="ChEBI" id="CHEBI:456216"/>
        <dbReference type="EC" id="2.7.2.3"/>
    </reaction>
</comment>
<comment type="pathway">
    <text evidence="1">Carbohydrate degradation; glycolysis; pyruvate from D-glyceraldehyde 3-phosphate: step 2/5.</text>
</comment>
<comment type="subunit">
    <text evidence="1">Monomer.</text>
</comment>
<comment type="subcellular location">
    <subcellularLocation>
        <location evidence="1">Cytoplasm</location>
    </subcellularLocation>
</comment>
<comment type="similarity">
    <text evidence="1">Belongs to the phosphoglycerate kinase family.</text>
</comment>